<organism>
    <name type="scientific">Macaca fascicularis</name>
    <name type="common">Crab-eating macaque</name>
    <name type="synonym">Cynomolgus monkey</name>
    <dbReference type="NCBI Taxonomy" id="9541"/>
    <lineage>
        <taxon>Eukaryota</taxon>
        <taxon>Metazoa</taxon>
        <taxon>Chordata</taxon>
        <taxon>Craniata</taxon>
        <taxon>Vertebrata</taxon>
        <taxon>Euteleostomi</taxon>
        <taxon>Mammalia</taxon>
        <taxon>Eutheria</taxon>
        <taxon>Euarchontoglires</taxon>
        <taxon>Primates</taxon>
        <taxon>Haplorrhini</taxon>
        <taxon>Catarrhini</taxon>
        <taxon>Cercopithecidae</taxon>
        <taxon>Cercopithecinae</taxon>
        <taxon>Macaca</taxon>
    </lineage>
</organism>
<sequence length="793" mass="89771">MLMLMLVAAVTMWLRPLVTAQPLCRARTVRTGKVFNVIQDVQGDRLYFRSTTTRLIKHPCKKNIALYLGKQVFFTTDNFETSLLPFTIPTSMQVGVPEVTSAHFTGSLLLLVVNHKVYTYDYESNSWNLSLGIKHPVTHVSGDNCCYTGSLFCVDVSNLVFAYFRGDQISQTYIYYSNTGGFSFWKYHYDRQAEIVGSLGGIFHLFSLSQVGMLVVDQGKGMFKYSDHPLNRSLGLSFDYNGTLDIVIAPGQKGILLLWFEKSLLFSRNAGQLVDTVRVKKGEQTLFTSIFEAQITIHNIAVNENELAVITREDNLYYGNLGIVPSSIIKFAHQHIWSEDAALMFRSSGILEILTPVRDTAFAAFDFQKCLLNIQAILMDPDLHVGRCNIEFLKGEFTYRMYTIDMHSQLELTALLIPQPGTSLIPLVMVSNPHSLGFQATFYESGYTSDGNTKYKLDIYLKQQQHWGRTDFNFTSSLKRATMSTLTVDIANKEISCVDIKPLSTLISVGCDLDKKIVIQNTVSACSKGVLDALALQDNYSFIIEKEFYDPGFQGRQSSKDLHVFYSYQQLGCPLLVYYDTPWKPVVELWKKDRFQEVVDAEYVLLEVNGQFSYSYSLTAKSAMCTSQPQNWTTMIKESGGPFFWNRENYVSCHDPNNDAPLRWPDVQYQILGGRTANQIVFSHNNGFYVFYISIVDPYYSYCQLETVFSIYVYGAFPVQLVSAGVVMVLLISSILGSVWLAYMIPRLLRTARGRRMTSFVAQLYGRCKTVCQFRASATARTGSKPMGRHRSS</sequence>
<proteinExistence type="evidence at transcript level"/>
<evidence type="ECO:0000250" key="1">
    <source>
        <dbReference type="UniProtKB" id="E9Q9F6"/>
    </source>
</evidence>
<evidence type="ECO:0000250" key="2">
    <source>
        <dbReference type="UniProtKB" id="Q86XM0"/>
    </source>
</evidence>
<evidence type="ECO:0000250" key="3">
    <source>
        <dbReference type="UniProtKB" id="Q91ZR5"/>
    </source>
</evidence>
<evidence type="ECO:0000255" key="4"/>
<evidence type="ECO:0000303" key="5">
    <source>
    </source>
</evidence>
<evidence type="ECO:0000305" key="6"/>
<accession>Q95JI2</accession>
<accession>Q95JI4</accession>
<accession>Q95LM7</accession>
<protein>
    <recommendedName>
        <fullName evidence="2">Cation channel sperm-associated auxiliary subunit delta</fullName>
        <shortName>CatSper-delta</shortName>
        <shortName>CatSperdelta</shortName>
    </recommendedName>
    <alternativeName>
        <fullName>Transmembrane protein 146</fullName>
    </alternativeName>
</protein>
<name>CTSRD_MACFA</name>
<gene>
    <name evidence="2" type="primary">CATSPERD</name>
    <name type="synonym">TMEM146</name>
    <name type="ORF">QtsA-17095</name>
    <name type="ORF">QtsA-17108</name>
    <name type="ORF">QtsA-19758</name>
</gene>
<dbReference type="EMBL" id="AB070197">
    <property type="protein sequence ID" value="BAB63142.1"/>
    <property type="status" value="ALT_INIT"/>
    <property type="molecule type" value="mRNA"/>
</dbReference>
<dbReference type="EMBL" id="AB070199">
    <property type="protein sequence ID" value="BAB63144.1"/>
    <property type="molecule type" value="mRNA"/>
</dbReference>
<dbReference type="EMBL" id="AB072761">
    <property type="protein sequence ID" value="BAB69730.1"/>
    <property type="molecule type" value="mRNA"/>
</dbReference>
<dbReference type="SMR" id="Q95JI2"/>
<dbReference type="STRING" id="9541.ENSMFAP00000028551"/>
<dbReference type="GlyCosmos" id="Q95JI2">
    <property type="glycosylation" value="6 sites, No reported glycans"/>
</dbReference>
<dbReference type="eggNOG" id="ENOG502QSPE">
    <property type="taxonomic scope" value="Eukaryota"/>
</dbReference>
<dbReference type="Proteomes" id="UP000233100">
    <property type="component" value="Unplaced"/>
</dbReference>
<dbReference type="GO" id="GO:0036128">
    <property type="term" value="C:CatSper complex"/>
    <property type="evidence" value="ECO:0000250"/>
    <property type="project" value="UniProtKB"/>
</dbReference>
<dbReference type="GO" id="GO:0097228">
    <property type="term" value="C:sperm principal piece"/>
    <property type="evidence" value="ECO:0000250"/>
    <property type="project" value="UniProtKB"/>
</dbReference>
<dbReference type="GO" id="GO:0030317">
    <property type="term" value="P:flagellated sperm motility"/>
    <property type="evidence" value="ECO:0000250"/>
    <property type="project" value="UniProtKB"/>
</dbReference>
<dbReference type="GO" id="GO:0048240">
    <property type="term" value="P:sperm capacitation"/>
    <property type="evidence" value="ECO:0000250"/>
    <property type="project" value="UniProtKB"/>
</dbReference>
<dbReference type="GO" id="GO:0007283">
    <property type="term" value="P:spermatogenesis"/>
    <property type="evidence" value="ECO:0000250"/>
    <property type="project" value="UniProtKB"/>
</dbReference>
<dbReference type="InterPro" id="IPR028751">
    <property type="entry name" value="CATSPERD/E"/>
</dbReference>
<dbReference type="InterPro" id="IPR053814">
    <property type="entry name" value="CATSPERD/E_C"/>
</dbReference>
<dbReference type="InterPro" id="IPR053813">
    <property type="entry name" value="CATSPERD_b-prop"/>
</dbReference>
<dbReference type="InterPro" id="IPR055451">
    <property type="entry name" value="Ig-like_CATSPERD"/>
</dbReference>
<dbReference type="PANTHER" id="PTHR33722:SF1">
    <property type="entry name" value="CATION CHANNEL SPERM-ASSOCIATED AUXILIARY SUBUNIT DELTA"/>
    <property type="match status" value="1"/>
</dbReference>
<dbReference type="PANTHER" id="PTHR33722">
    <property type="entry name" value="CATION CHANNEL SPERM-ASSOCIATED PROTEIN SUBUNIT DELTA-RELATED"/>
    <property type="match status" value="1"/>
</dbReference>
<dbReference type="Pfam" id="PF15020">
    <property type="entry name" value="Beta-prop_CATSPERD"/>
    <property type="match status" value="1"/>
</dbReference>
<dbReference type="Pfam" id="PF22850">
    <property type="entry name" value="CATSPERD-E_C"/>
    <property type="match status" value="1"/>
</dbReference>
<dbReference type="Pfam" id="PF23747">
    <property type="entry name" value="Ig-like_CATSPERD"/>
    <property type="match status" value="1"/>
</dbReference>
<comment type="function">
    <text evidence="1">Auxiliary component of the CatSper complex, a complex involved in sperm cell hyperactivation. Sperm cell hyperactivation is needed for sperm motility which is essential late in the preparation of sperm for fertilization. Required for CATSPER1 stability before intraflagellar transport and/or incorporation of the CatSper complex channel into the flagellar membrane.</text>
</comment>
<comment type="subunit">
    <text evidence="1 3">Component of the CatSper complex or CatSpermasome composed of the core pore-forming members CATSPER1, CATSPER2, CATSPER3 and CATSPER4 as well as auxiliary members CATSPERB, CATSPERG, CATSPERD, CATSPERE, CATSPERZ, C2CD6/CATSPERT, TMEM249, TMEM262 and EFCAB9 (By similarity). HSPA1 may be an additional auxiliary complex member (By similarity). The core complex members CATSPER1, CATSPER2, CATSPER3 and CATSPER4 form a heterotetrameric channel. The auxiliary CATSPERB, CATSPERG, CATSPERD and CATSPERE subunits form a pavilion-like structure over the pore which stabilizes the complex through interactions with CATSPER4, CATSPER3, CATSPER1 and CATSPER2 respectively. TMEM262/CATSPERH interacts with CATSPERB, further stabilizing the complex. C2CD6/CATSPERT interacts at least with CATSPERD and is required for targeting the CatSper complex in the flagellar membrane (By similarity).</text>
</comment>
<comment type="subcellular location">
    <subcellularLocation>
        <location evidence="1">Cell projection</location>
        <location evidence="1">Cilium</location>
        <location evidence="1">Flagellum membrane</location>
        <topology evidence="4">Single-pass type I membrane protein</topology>
    </subcellularLocation>
    <text evidence="1">Specifically located in the principal piece of sperm tail.</text>
</comment>
<comment type="alternative products">
    <event type="alternative splicing"/>
    <isoform>
        <id>Q95JI2-1</id>
        <name>1</name>
        <sequence type="displayed"/>
    </isoform>
    <isoform>
        <id>Q95JI2-2</id>
        <name>2</name>
        <sequence type="described" ref="VSP_025347"/>
    </isoform>
</comment>
<comment type="similarity">
    <text evidence="6">Belongs to the CATSPERD family.</text>
</comment>
<comment type="caution">
    <text evidence="6">In mouse, Slco6c1 is an additional auxiliary subunit of the CatSper complex. It is unclear if the related SLCO6A1 protein performs the same role in non-rodent species.</text>
</comment>
<comment type="sequence caution" evidence="6">
    <conflict type="erroneous initiation">
        <sequence resource="EMBL-CDS" id="BAB63142"/>
    </conflict>
    <text>Extended N-terminus.</text>
</comment>
<reference key="1">
    <citation type="journal article" date="2002" name="BMC Genomics">
        <title>Cynomolgus monkey testicular cDNAs for discovery of novel human genes in the human genome sequence.</title>
        <authorList>
            <person name="Osada N."/>
            <person name="Hida M."/>
            <person name="Kusuda J."/>
            <person name="Tanuma R."/>
            <person name="Hirata M."/>
            <person name="Suto Y."/>
            <person name="Hirai M."/>
            <person name="Terao K."/>
            <person name="Sugano S."/>
            <person name="Hashimoto K."/>
        </authorList>
    </citation>
    <scope>NUCLEOTIDE SEQUENCE [LARGE SCALE MRNA] (ISOFORMS 1 AND 2)</scope>
    <source>
        <tissue>Testis</tissue>
    </source>
</reference>
<keyword id="KW-0025">Alternative splicing</keyword>
<keyword id="KW-1003">Cell membrane</keyword>
<keyword id="KW-0966">Cell projection</keyword>
<keyword id="KW-0969">Cilium</keyword>
<keyword id="KW-0217">Developmental protein</keyword>
<keyword id="KW-0221">Differentiation</keyword>
<keyword id="KW-1015">Disulfide bond</keyword>
<keyword id="KW-0282">Flagellum</keyword>
<keyword id="KW-0325">Glycoprotein</keyword>
<keyword id="KW-0472">Membrane</keyword>
<keyword id="KW-1185">Reference proteome</keyword>
<keyword id="KW-0732">Signal</keyword>
<keyword id="KW-0744">Spermatogenesis</keyword>
<keyword id="KW-0812">Transmembrane</keyword>
<keyword id="KW-1133">Transmembrane helix</keyword>
<feature type="signal peptide" evidence="4">
    <location>
        <begin position="1"/>
        <end position="20"/>
    </location>
</feature>
<feature type="chain" id="PRO_0000287151" description="Cation channel sperm-associated auxiliary subunit delta">
    <location>
        <begin position="21"/>
        <end position="793"/>
    </location>
</feature>
<feature type="topological domain" description="Extracellular" evidence="1">
    <location>
        <begin position="21"/>
        <end position="725"/>
    </location>
</feature>
<feature type="transmembrane region" description="Helical" evidence="1">
    <location>
        <begin position="726"/>
        <end position="747"/>
    </location>
</feature>
<feature type="topological domain" description="Cytoplasmic" evidence="1">
    <location>
        <begin position="748"/>
        <end position="793"/>
    </location>
</feature>
<feature type="glycosylation site" description="N-linked (GlcNAc...) asparagine" evidence="4">
    <location>
        <position position="128"/>
    </location>
</feature>
<feature type="glycosylation site" description="N-linked (GlcNAc...) asparagine" evidence="4">
    <location>
        <position position="231"/>
    </location>
</feature>
<feature type="glycosylation site" description="N-linked (GlcNAc...) asparagine" evidence="4">
    <location>
        <position position="241"/>
    </location>
</feature>
<feature type="glycosylation site" description="N-linked (GlcNAc...) asparagine" evidence="4">
    <location>
        <position position="473"/>
    </location>
</feature>
<feature type="glycosylation site" description="N-linked (GlcNAc...) asparagine" evidence="4">
    <location>
        <position position="539"/>
    </location>
</feature>
<feature type="glycosylation site" description="N-linked (GlcNAc...) asparagine" evidence="4">
    <location>
        <position position="631"/>
    </location>
</feature>
<feature type="disulfide bond" evidence="1">
    <location>
        <begin position="24"/>
        <end position="370"/>
    </location>
</feature>
<feature type="disulfide bond" evidence="1">
    <location>
        <begin position="60"/>
        <end position="146"/>
    </location>
</feature>
<feature type="disulfide bond" evidence="1">
    <location>
        <begin position="145"/>
        <end position="153"/>
    </location>
</feature>
<feature type="disulfide bond" evidence="1">
    <location>
        <begin position="388"/>
        <end position="497"/>
    </location>
</feature>
<feature type="disulfide bond" evidence="1">
    <location>
        <begin position="511"/>
        <end position="703"/>
    </location>
</feature>
<feature type="disulfide bond" evidence="1">
    <location>
        <begin position="526"/>
        <end position="573"/>
    </location>
</feature>
<feature type="disulfide bond" evidence="1">
    <location>
        <begin position="625"/>
        <end position="653"/>
    </location>
</feature>
<feature type="splice variant" id="VSP_025347" description="In isoform 2." evidence="5">
    <location>
        <begin position="249"/>
        <end position="439"/>
    </location>
</feature>
<feature type="sequence conflict" description="In Ref. 1; BAB63142." evidence="6" ref="1">
    <original>L</original>
    <variation>P</variation>
    <location>
        <position position="83"/>
    </location>
</feature>
<feature type="sequence conflict" description="In Ref. 1; BAB63144/BAB69730." evidence="6" ref="1">
    <original>T</original>
    <variation>S</variation>
    <location>
        <position position="90"/>
    </location>
</feature>
<feature type="sequence conflict" description="In Ref. 1; BAB63142." evidence="6" ref="1">
    <original>D</original>
    <variation>N</variation>
    <location>
        <position position="382"/>
    </location>
</feature>
<feature type="sequence conflict" description="In Ref. 1; BAB69730." evidence="6" ref="1">
    <original>Q</original>
    <variation>E</variation>
    <location>
        <position position="520"/>
    </location>
</feature>
<feature type="sequence conflict" description="In Ref. 1; BAB63144." evidence="6" ref="1">
    <original>K</original>
    <variation>E</variation>
    <location>
        <position position="546"/>
    </location>
</feature>
<feature type="sequence conflict" description="In Ref. 1; BAB63144." evidence="6" ref="1">
    <original>P</original>
    <variation>S</variation>
    <location>
        <position position="661"/>
    </location>
</feature>